<name>CCA_COXBU</name>
<protein>
    <recommendedName>
        <fullName evidence="1">CCA-adding enzyme</fullName>
        <ecNumber evidence="1">2.7.7.72</ecNumber>
    </recommendedName>
    <alternativeName>
        <fullName evidence="1">CCA tRNA nucleotidyltransferase</fullName>
    </alternativeName>
    <alternativeName>
        <fullName evidence="1">tRNA CCA-pyrophosphorylase</fullName>
    </alternativeName>
    <alternativeName>
        <fullName evidence="1">tRNA adenylyl-/cytidylyl- transferase</fullName>
    </alternativeName>
    <alternativeName>
        <fullName evidence="1">tRNA nucleotidyltransferase</fullName>
    </alternativeName>
    <alternativeName>
        <fullName evidence="1">tRNA-NT</fullName>
    </alternativeName>
</protein>
<comment type="function">
    <text evidence="1">Catalyzes the addition and repair of the essential 3'-terminal CCA sequence in tRNAs without using a nucleic acid template. Adds these three nucleotides in the order of C, C, and A to the tRNA nucleotide-73, using CTP and ATP as substrates and producing inorganic pyrophosphate. tRNA 3'-terminal CCA addition is required both for tRNA processing and repair. Also involved in tRNA surveillance by mediating tandem CCA addition to generate a CCACCA at the 3' terminus of unstable tRNAs. While stable tRNAs receive only 3'-terminal CCA, unstable tRNAs are marked with CCACCA and rapidly degraded.</text>
</comment>
<comment type="catalytic activity">
    <reaction evidence="1">
        <text>a tRNA precursor + 2 CTP + ATP = a tRNA with a 3' CCA end + 3 diphosphate</text>
        <dbReference type="Rhea" id="RHEA:14433"/>
        <dbReference type="Rhea" id="RHEA-COMP:10465"/>
        <dbReference type="Rhea" id="RHEA-COMP:10468"/>
        <dbReference type="ChEBI" id="CHEBI:30616"/>
        <dbReference type="ChEBI" id="CHEBI:33019"/>
        <dbReference type="ChEBI" id="CHEBI:37563"/>
        <dbReference type="ChEBI" id="CHEBI:74896"/>
        <dbReference type="ChEBI" id="CHEBI:83071"/>
        <dbReference type="EC" id="2.7.7.72"/>
    </reaction>
</comment>
<comment type="catalytic activity">
    <reaction evidence="1">
        <text>a tRNA with a 3' CCA end + 2 CTP + ATP = a tRNA with a 3' CCACCA end + 3 diphosphate</text>
        <dbReference type="Rhea" id="RHEA:76235"/>
        <dbReference type="Rhea" id="RHEA-COMP:10468"/>
        <dbReference type="Rhea" id="RHEA-COMP:18655"/>
        <dbReference type="ChEBI" id="CHEBI:30616"/>
        <dbReference type="ChEBI" id="CHEBI:33019"/>
        <dbReference type="ChEBI" id="CHEBI:37563"/>
        <dbReference type="ChEBI" id="CHEBI:83071"/>
        <dbReference type="ChEBI" id="CHEBI:195187"/>
    </reaction>
    <physiologicalReaction direction="left-to-right" evidence="1">
        <dbReference type="Rhea" id="RHEA:76236"/>
    </physiologicalReaction>
</comment>
<comment type="cofactor">
    <cofactor evidence="1">
        <name>Mg(2+)</name>
        <dbReference type="ChEBI" id="CHEBI:18420"/>
    </cofactor>
</comment>
<comment type="miscellaneous">
    <text evidence="1">A single active site specifically recognizes both ATP and CTP and is responsible for their addition.</text>
</comment>
<comment type="similarity">
    <text evidence="1">Belongs to the tRNA nucleotidyltransferase/poly(A) polymerase family. Bacterial CCA-adding enzyme type 2 subfamily.</text>
</comment>
<comment type="sequence caution" evidence="2">
    <conflict type="erroneous initiation">
        <sequence resource="EMBL-CDS" id="AAO91320"/>
    </conflict>
</comment>
<proteinExistence type="inferred from homology"/>
<reference key="1">
    <citation type="journal article" date="2003" name="Proc. Natl. Acad. Sci. U.S.A.">
        <title>Complete genome sequence of the Q-fever pathogen, Coxiella burnetii.</title>
        <authorList>
            <person name="Seshadri R."/>
            <person name="Paulsen I.T."/>
            <person name="Eisen J.A."/>
            <person name="Read T.D."/>
            <person name="Nelson K.E."/>
            <person name="Nelson W.C."/>
            <person name="Ward N.L."/>
            <person name="Tettelin H."/>
            <person name="Davidsen T.M."/>
            <person name="Beanan M.J."/>
            <person name="DeBoy R.T."/>
            <person name="Daugherty S.C."/>
            <person name="Brinkac L.M."/>
            <person name="Madupu R."/>
            <person name="Dodson R.J."/>
            <person name="Khouri H.M."/>
            <person name="Lee K.H."/>
            <person name="Carty H.A."/>
            <person name="Scanlan D."/>
            <person name="Heinzen R.A."/>
            <person name="Thompson H.A."/>
            <person name="Samuel J.E."/>
            <person name="Fraser C.M."/>
            <person name="Heidelberg J.F."/>
        </authorList>
    </citation>
    <scope>NUCLEOTIDE SEQUENCE [LARGE SCALE GENOMIC DNA]</scope>
    <source>
        <strain>RSA 493 / Nine Mile phase I</strain>
    </source>
</reference>
<accession>Q820V9</accession>
<gene>
    <name evidence="1" type="primary">cca</name>
    <name type="ordered locus">CBU_1827</name>
</gene>
<feature type="chain" id="PRO_0000139021" description="CCA-adding enzyme">
    <location>
        <begin position="1"/>
        <end position="376"/>
    </location>
</feature>
<feature type="binding site" evidence="1">
    <location>
        <position position="23"/>
    </location>
    <ligand>
        <name>ATP</name>
        <dbReference type="ChEBI" id="CHEBI:30616"/>
    </ligand>
</feature>
<feature type="binding site" evidence="1">
    <location>
        <position position="23"/>
    </location>
    <ligand>
        <name>CTP</name>
        <dbReference type="ChEBI" id="CHEBI:37563"/>
    </ligand>
</feature>
<feature type="binding site" evidence="1">
    <location>
        <position position="26"/>
    </location>
    <ligand>
        <name>ATP</name>
        <dbReference type="ChEBI" id="CHEBI:30616"/>
    </ligand>
</feature>
<feature type="binding site" evidence="1">
    <location>
        <position position="26"/>
    </location>
    <ligand>
        <name>CTP</name>
        <dbReference type="ChEBI" id="CHEBI:37563"/>
    </ligand>
</feature>
<feature type="binding site" evidence="1">
    <location>
        <position position="36"/>
    </location>
    <ligand>
        <name>Mg(2+)</name>
        <dbReference type="ChEBI" id="CHEBI:18420"/>
    </ligand>
</feature>
<feature type="binding site" evidence="1">
    <location>
        <position position="38"/>
    </location>
    <ligand>
        <name>Mg(2+)</name>
        <dbReference type="ChEBI" id="CHEBI:18420"/>
    </ligand>
</feature>
<feature type="binding site" evidence="1">
    <location>
        <position position="106"/>
    </location>
    <ligand>
        <name>ATP</name>
        <dbReference type="ChEBI" id="CHEBI:30616"/>
    </ligand>
</feature>
<feature type="binding site" evidence="1">
    <location>
        <position position="106"/>
    </location>
    <ligand>
        <name>CTP</name>
        <dbReference type="ChEBI" id="CHEBI:37563"/>
    </ligand>
</feature>
<feature type="binding site" evidence="1">
    <location>
        <position position="152"/>
    </location>
    <ligand>
        <name>ATP</name>
        <dbReference type="ChEBI" id="CHEBI:30616"/>
    </ligand>
</feature>
<feature type="binding site" evidence="1">
    <location>
        <position position="152"/>
    </location>
    <ligand>
        <name>CTP</name>
        <dbReference type="ChEBI" id="CHEBI:37563"/>
    </ligand>
</feature>
<feature type="binding site" evidence="1">
    <location>
        <position position="155"/>
    </location>
    <ligand>
        <name>ATP</name>
        <dbReference type="ChEBI" id="CHEBI:30616"/>
    </ligand>
</feature>
<feature type="binding site" evidence="1">
    <location>
        <position position="155"/>
    </location>
    <ligand>
        <name>CTP</name>
        <dbReference type="ChEBI" id="CHEBI:37563"/>
    </ligand>
</feature>
<keyword id="KW-0067">ATP-binding</keyword>
<keyword id="KW-0460">Magnesium</keyword>
<keyword id="KW-0479">Metal-binding</keyword>
<keyword id="KW-0547">Nucleotide-binding</keyword>
<keyword id="KW-0548">Nucleotidyltransferase</keyword>
<keyword id="KW-1185">Reference proteome</keyword>
<keyword id="KW-0692">RNA repair</keyword>
<keyword id="KW-0694">RNA-binding</keyword>
<keyword id="KW-0808">Transferase</keyword>
<keyword id="KW-0819">tRNA processing</keyword>
<evidence type="ECO:0000255" key="1">
    <source>
        <dbReference type="HAMAP-Rule" id="MF_01262"/>
    </source>
</evidence>
<evidence type="ECO:0000305" key="2"/>
<dbReference type="EC" id="2.7.7.72" evidence="1"/>
<dbReference type="EMBL" id="AE016828">
    <property type="protein sequence ID" value="AAO91320.2"/>
    <property type="status" value="ALT_INIT"/>
    <property type="molecule type" value="Genomic_DNA"/>
</dbReference>
<dbReference type="RefSeq" id="NP_820806.2">
    <property type="nucleotide sequence ID" value="NC_002971.3"/>
</dbReference>
<dbReference type="SMR" id="Q820V9"/>
<dbReference type="STRING" id="227377.CBU_1827"/>
<dbReference type="EnsemblBacteria" id="AAO91320">
    <property type="protein sequence ID" value="AAO91320"/>
    <property type="gene ID" value="CBU_1827"/>
</dbReference>
<dbReference type="GeneID" id="1209738"/>
<dbReference type="KEGG" id="cbu:CBU_1827"/>
<dbReference type="PATRIC" id="fig|227377.7.peg.1811"/>
<dbReference type="eggNOG" id="COG0617">
    <property type="taxonomic scope" value="Bacteria"/>
</dbReference>
<dbReference type="HOGENOM" id="CLU_015961_1_0_6"/>
<dbReference type="OrthoDB" id="9805698at2"/>
<dbReference type="Proteomes" id="UP000002671">
    <property type="component" value="Chromosome"/>
</dbReference>
<dbReference type="GO" id="GO:0005524">
    <property type="term" value="F:ATP binding"/>
    <property type="evidence" value="ECO:0007669"/>
    <property type="project" value="UniProtKB-UniRule"/>
</dbReference>
<dbReference type="GO" id="GO:0004810">
    <property type="term" value="F:CCA tRNA nucleotidyltransferase activity"/>
    <property type="evidence" value="ECO:0007669"/>
    <property type="project" value="UniProtKB-UniRule"/>
</dbReference>
<dbReference type="GO" id="GO:0160016">
    <property type="term" value="F:CCACCA tRNA nucleotidyltransferase activity"/>
    <property type="evidence" value="ECO:0000318"/>
    <property type="project" value="GO_Central"/>
</dbReference>
<dbReference type="GO" id="GO:0000287">
    <property type="term" value="F:magnesium ion binding"/>
    <property type="evidence" value="ECO:0007669"/>
    <property type="project" value="UniProtKB-UniRule"/>
</dbReference>
<dbReference type="GO" id="GO:0000049">
    <property type="term" value="F:tRNA binding"/>
    <property type="evidence" value="ECO:0007669"/>
    <property type="project" value="UniProtKB-UniRule"/>
</dbReference>
<dbReference type="GO" id="GO:0042245">
    <property type="term" value="P:RNA repair"/>
    <property type="evidence" value="ECO:0007669"/>
    <property type="project" value="UniProtKB-KW"/>
</dbReference>
<dbReference type="GO" id="GO:0001680">
    <property type="term" value="P:tRNA 3'-terminal CCA addition"/>
    <property type="evidence" value="ECO:0000318"/>
    <property type="project" value="GO_Central"/>
</dbReference>
<dbReference type="GO" id="GO:0106354">
    <property type="term" value="P:tRNA surveillance"/>
    <property type="evidence" value="ECO:0000318"/>
    <property type="project" value="GO_Central"/>
</dbReference>
<dbReference type="CDD" id="cd05398">
    <property type="entry name" value="NT_ClassII-CCAase"/>
    <property type="match status" value="1"/>
</dbReference>
<dbReference type="FunFam" id="3.30.460.10:FF:000016">
    <property type="entry name" value="Multifunctional CCA protein"/>
    <property type="match status" value="1"/>
</dbReference>
<dbReference type="Gene3D" id="3.30.460.10">
    <property type="entry name" value="Beta Polymerase, domain 2"/>
    <property type="match status" value="1"/>
</dbReference>
<dbReference type="Gene3D" id="1.10.3090.10">
    <property type="entry name" value="cca-adding enzyme, domain 2"/>
    <property type="match status" value="1"/>
</dbReference>
<dbReference type="HAMAP" id="MF_01262">
    <property type="entry name" value="CCA_bact_type2"/>
    <property type="match status" value="1"/>
</dbReference>
<dbReference type="InterPro" id="IPR012006">
    <property type="entry name" value="CCA_bact"/>
</dbReference>
<dbReference type="InterPro" id="IPR043519">
    <property type="entry name" value="NT_sf"/>
</dbReference>
<dbReference type="InterPro" id="IPR002646">
    <property type="entry name" value="PolA_pol_head_dom"/>
</dbReference>
<dbReference type="InterPro" id="IPR032828">
    <property type="entry name" value="PolyA_RNA-bd"/>
</dbReference>
<dbReference type="InterPro" id="IPR050124">
    <property type="entry name" value="tRNA_CCA-adding_enzyme"/>
</dbReference>
<dbReference type="PANTHER" id="PTHR47545">
    <property type="entry name" value="MULTIFUNCTIONAL CCA PROTEIN"/>
    <property type="match status" value="1"/>
</dbReference>
<dbReference type="PANTHER" id="PTHR47545:SF1">
    <property type="entry name" value="MULTIFUNCTIONAL CCA PROTEIN"/>
    <property type="match status" value="1"/>
</dbReference>
<dbReference type="Pfam" id="PF01743">
    <property type="entry name" value="PolyA_pol"/>
    <property type="match status" value="1"/>
</dbReference>
<dbReference type="Pfam" id="PF12627">
    <property type="entry name" value="PolyA_pol_RNAbd"/>
    <property type="match status" value="1"/>
</dbReference>
<dbReference type="PIRSF" id="PIRSF000813">
    <property type="entry name" value="CCA_bact"/>
    <property type="match status" value="1"/>
</dbReference>
<dbReference type="SUPFAM" id="SSF81301">
    <property type="entry name" value="Nucleotidyltransferase"/>
    <property type="match status" value="1"/>
</dbReference>
<dbReference type="SUPFAM" id="SSF81891">
    <property type="entry name" value="Poly A polymerase C-terminal region-like"/>
    <property type="match status" value="1"/>
</dbReference>
<sequence length="376" mass="42438">MLVFYGFLSSRSISHLKVYLVGGAVRDQLLGLPVKEKDWVVVGATPEEMTARGFKPVGKEFPVFLHPETHEEYALARTERKVAKGYKGFTFYAAPDVSLEEDLKRRDLTINAIAETPEGQLIDPYGGQEDLKNKVLRHVSVAFQEDPVRVLRLARLATKFPDFSIHPDTLELMKKMVCAGEIDALVPERIWQELNRALGNEKPTRFFTVLNQCGALAILFPEIKMEGKGMAALQSVTDKTPSPLIRFATLQSDLPPEIIQKLAGRYRVPNEYADLAILVARFGSDYVNLNRMDETSLLNFLLKTDALRRQERFDQFIFTCDLISSTTSSQPKKIKEIIKAVKSVDIKPLQEKQLKGEAFAKALEKLRLEAIRTLIS</sequence>
<organism>
    <name type="scientific">Coxiella burnetii (strain RSA 493 / Nine Mile phase I)</name>
    <dbReference type="NCBI Taxonomy" id="227377"/>
    <lineage>
        <taxon>Bacteria</taxon>
        <taxon>Pseudomonadati</taxon>
        <taxon>Pseudomonadota</taxon>
        <taxon>Gammaproteobacteria</taxon>
        <taxon>Legionellales</taxon>
        <taxon>Coxiellaceae</taxon>
        <taxon>Coxiella</taxon>
    </lineage>
</organism>